<protein>
    <recommendedName>
        <fullName>Uncharacterized protein L606</fullName>
    </recommendedName>
</protein>
<feature type="chain" id="PRO_0000253285" description="Uncharacterized protein L606">
    <location>
        <begin position="1"/>
        <end position="186"/>
    </location>
</feature>
<feature type="transmembrane region" description="Helical" evidence="1">
    <location>
        <begin position="47"/>
        <end position="67"/>
    </location>
</feature>
<feature type="transmembrane region" description="Helical" evidence="1">
    <location>
        <begin position="114"/>
        <end position="134"/>
    </location>
</feature>
<feature type="transmembrane region" description="Helical" evidence="1">
    <location>
        <begin position="144"/>
        <end position="164"/>
    </location>
</feature>
<feature type="glycosylation site" description="N-linked (GlcNAc...) asparagine; by host" evidence="1">
    <location>
        <position position="34"/>
    </location>
</feature>
<comment type="subcellular location">
    <subcellularLocation>
        <location evidence="2">Membrane</location>
        <topology evidence="2">Multi-pass membrane protein</topology>
    </subcellularLocation>
</comment>
<keyword id="KW-0325">Glycoprotein</keyword>
<keyword id="KW-0472">Membrane</keyword>
<keyword id="KW-1185">Reference proteome</keyword>
<keyword id="KW-0812">Transmembrane</keyword>
<keyword id="KW-1133">Transmembrane helix</keyword>
<name>YL606_MIMIV</name>
<dbReference type="EMBL" id="AY653733">
    <property type="protein sequence ID" value="AAV50869.1"/>
    <property type="molecule type" value="Genomic_DNA"/>
</dbReference>
<dbReference type="KEGG" id="vg:9925244"/>
<dbReference type="Proteomes" id="UP000001134">
    <property type="component" value="Genome"/>
</dbReference>
<dbReference type="GO" id="GO:0016020">
    <property type="term" value="C:membrane"/>
    <property type="evidence" value="ECO:0007669"/>
    <property type="project" value="UniProtKB-SubCell"/>
</dbReference>
<organism>
    <name type="scientific">Acanthamoeba polyphaga mimivirus</name>
    <name type="common">APMV</name>
    <dbReference type="NCBI Taxonomy" id="212035"/>
    <lineage>
        <taxon>Viruses</taxon>
        <taxon>Varidnaviria</taxon>
        <taxon>Bamfordvirae</taxon>
        <taxon>Nucleocytoviricota</taxon>
        <taxon>Megaviricetes</taxon>
        <taxon>Imitervirales</taxon>
        <taxon>Mimiviridae</taxon>
        <taxon>Megamimivirinae</taxon>
        <taxon>Mimivirus</taxon>
        <taxon>Mimivirus bradfordmassiliense</taxon>
    </lineage>
</organism>
<reference key="1">
    <citation type="journal article" date="2004" name="Science">
        <title>The 1.2-megabase genome sequence of Mimivirus.</title>
        <authorList>
            <person name="Raoult D."/>
            <person name="Audic S."/>
            <person name="Robert C."/>
            <person name="Abergel C."/>
            <person name="Renesto P."/>
            <person name="Ogata H."/>
            <person name="La Scola B."/>
            <person name="Susan M."/>
            <person name="Claverie J.-M."/>
        </authorList>
    </citation>
    <scope>NUCLEOTIDE SEQUENCE [LARGE SCALE GENOMIC DNA]</scope>
    <source>
        <strain>Rowbotham-Bradford</strain>
    </source>
</reference>
<sequence>MSYLTKYIDYFKSFTIMENPTESSRRDMEILVKNISSSLTTFTRDPIGMVVSSLMLLLVYFCFATTFIYKGISLFIPSYCIYHVLNSNTNQEVKYKNILTYFFIYSHIEFISDILETVGFGLLHLKIALVIVLLYTVHYRNEWLEMIYNKIVYFDTIGFYTLFFTYSRLIQEYNKFRQTVKIKKNE</sequence>
<proteinExistence type="predicted"/>
<gene>
    <name type="ordered locus">MIMI_L606</name>
</gene>
<organismHost>
    <name type="scientific">Acanthamoeba polyphaga</name>
    <name type="common">Amoeba</name>
    <dbReference type="NCBI Taxonomy" id="5757"/>
</organismHost>
<accession>Q5UP70</accession>
<evidence type="ECO:0000255" key="1"/>
<evidence type="ECO:0000305" key="2"/>